<comment type="catalytic activity">
    <reaction>
        <text>4 Fe(II)-[cytochrome c] + O2 + 8 H(+)(in) = 4 Fe(III)-[cytochrome c] + 2 H2O + 4 H(+)(out)</text>
        <dbReference type="Rhea" id="RHEA:11436"/>
        <dbReference type="Rhea" id="RHEA-COMP:10350"/>
        <dbReference type="Rhea" id="RHEA-COMP:14399"/>
        <dbReference type="ChEBI" id="CHEBI:15377"/>
        <dbReference type="ChEBI" id="CHEBI:15378"/>
        <dbReference type="ChEBI" id="CHEBI:15379"/>
        <dbReference type="ChEBI" id="CHEBI:29033"/>
        <dbReference type="ChEBI" id="CHEBI:29034"/>
        <dbReference type="EC" id="7.1.1.9"/>
    </reaction>
</comment>
<comment type="subcellular location">
    <subcellularLocation>
        <location>Cell membrane</location>
        <topology>Multi-pass membrane protein</topology>
    </subcellularLocation>
</comment>
<comment type="similarity">
    <text evidence="2">Belongs to the cytochrome c oxidase subunit 3 family.</text>
</comment>
<feature type="chain" id="PRO_0000183875" description="Cytochrome c oxidase subunit 3">
    <location>
        <begin position="1"/>
        <end position="206"/>
    </location>
</feature>
<feature type="transmembrane region" description="Helical" evidence="1">
    <location>
        <begin position="26"/>
        <end position="46"/>
    </location>
</feature>
<feature type="transmembrane region" description="Helical" evidence="1">
    <location>
        <begin position="68"/>
        <end position="88"/>
    </location>
</feature>
<feature type="transmembrane region" description="Helical" evidence="1">
    <location>
        <begin position="97"/>
        <end position="117"/>
    </location>
</feature>
<feature type="transmembrane region" description="Helical" evidence="1">
    <location>
        <begin position="143"/>
        <end position="163"/>
    </location>
</feature>
<feature type="transmembrane region" description="Helical" evidence="1">
    <location>
        <begin position="185"/>
        <end position="205"/>
    </location>
</feature>
<accession>Q04442</accession>
<accession>D3FU48</accession>
<reference key="1">
    <citation type="journal article" date="1993" name="J. Biol. Chem.">
        <title>Cloning of the cta operon from alkaliphilic Bacillus firmus OF4 and characterization of the pH-regulated cytochrome caa3 oxidase it encodes.</title>
        <authorList>
            <person name="Quirk P.G."/>
            <person name="Hicks D.B."/>
            <person name="Krulwich T.A."/>
        </authorList>
    </citation>
    <scope>NUCLEOTIDE SEQUENCE [GENOMIC DNA]</scope>
</reference>
<reference key="2">
    <citation type="journal article" date="2011" name="Environ. Microbiol.">
        <title>Genome of alkaliphilic Bacillus pseudofirmus OF4 reveals adaptations that support the ability to grow in an external pH range from 7.5 to 11.4.</title>
        <authorList>
            <person name="Janto B."/>
            <person name="Ahmed A."/>
            <person name="Ito M."/>
            <person name="Liu J."/>
            <person name="Hicks D.B."/>
            <person name="Pagni S."/>
            <person name="Fackelmayer O.J."/>
            <person name="Smith T.A."/>
            <person name="Earl J."/>
            <person name="Elbourne L.D."/>
            <person name="Hassan K."/>
            <person name="Paulsen I.T."/>
            <person name="Kolsto A.B."/>
            <person name="Tourasse N.J."/>
            <person name="Ehrlich G.D."/>
            <person name="Boissy R."/>
            <person name="Ivey D.M."/>
            <person name="Li G."/>
            <person name="Xue Y."/>
            <person name="Ma Y."/>
            <person name="Hu F.Z."/>
            <person name="Krulwich T.A."/>
        </authorList>
    </citation>
    <scope>NUCLEOTIDE SEQUENCE [LARGE SCALE GENOMIC DNA]</scope>
    <source>
        <strain>ATCC BAA-2126 / JCM 17055 / OF4</strain>
    </source>
</reference>
<name>COX3_ALKPO</name>
<dbReference type="EC" id="7.1.1.9"/>
<dbReference type="EMBL" id="M94110">
    <property type="protein sequence ID" value="AAA22366.1"/>
    <property type="molecule type" value="Genomic_DNA"/>
</dbReference>
<dbReference type="EMBL" id="CP001878">
    <property type="protein sequence ID" value="ADC48250.1"/>
    <property type="molecule type" value="Genomic_DNA"/>
</dbReference>
<dbReference type="RefSeq" id="WP_012959532.1">
    <property type="nucleotide sequence ID" value="NC_013791.2"/>
</dbReference>
<dbReference type="SMR" id="Q04442"/>
<dbReference type="STRING" id="398511.BpOF4_00905"/>
<dbReference type="KEGG" id="bpf:BpOF4_00905"/>
<dbReference type="eggNOG" id="COG1845">
    <property type="taxonomic scope" value="Bacteria"/>
</dbReference>
<dbReference type="HOGENOM" id="CLU_044071_3_2_9"/>
<dbReference type="Proteomes" id="UP000001544">
    <property type="component" value="Chromosome"/>
</dbReference>
<dbReference type="GO" id="GO:0005886">
    <property type="term" value="C:plasma membrane"/>
    <property type="evidence" value="ECO:0007669"/>
    <property type="project" value="UniProtKB-SubCell"/>
</dbReference>
<dbReference type="GO" id="GO:0004129">
    <property type="term" value="F:cytochrome-c oxidase activity"/>
    <property type="evidence" value="ECO:0007669"/>
    <property type="project" value="UniProtKB-EC"/>
</dbReference>
<dbReference type="GO" id="GO:0019646">
    <property type="term" value="P:aerobic electron transport chain"/>
    <property type="evidence" value="ECO:0007669"/>
    <property type="project" value="InterPro"/>
</dbReference>
<dbReference type="CDD" id="cd02863">
    <property type="entry name" value="Ubiquinol_oxidase_III"/>
    <property type="match status" value="1"/>
</dbReference>
<dbReference type="FunFam" id="1.20.120.80:FF:000001">
    <property type="entry name" value="Cytochrome (Ubi)quinol oxidase subunit III"/>
    <property type="match status" value="1"/>
</dbReference>
<dbReference type="Gene3D" id="1.20.120.80">
    <property type="entry name" value="Cytochrome c oxidase, subunit III, four-helix bundle"/>
    <property type="match status" value="1"/>
</dbReference>
<dbReference type="InterPro" id="IPR024791">
    <property type="entry name" value="Cyt_c/ubiquinol_Oxase_su3"/>
</dbReference>
<dbReference type="InterPro" id="IPR000298">
    <property type="entry name" value="Cyt_c_oxidase-like_su3"/>
</dbReference>
<dbReference type="InterPro" id="IPR035973">
    <property type="entry name" value="Cyt_c_oxidase_su3-like_sf"/>
</dbReference>
<dbReference type="InterPro" id="IPR013833">
    <property type="entry name" value="Cyt_c_oxidase_su3_a-hlx"/>
</dbReference>
<dbReference type="InterPro" id="IPR033946">
    <property type="entry name" value="Ubiquinol_oxase_su3_dom"/>
</dbReference>
<dbReference type="PANTHER" id="PTHR11403:SF9">
    <property type="entry name" value="CYTOCHROME C OXIDASE SUBUNIT 3"/>
    <property type="match status" value="1"/>
</dbReference>
<dbReference type="PANTHER" id="PTHR11403">
    <property type="entry name" value="CYTOCHROME C OXIDASE SUBUNIT III"/>
    <property type="match status" value="1"/>
</dbReference>
<dbReference type="Pfam" id="PF00510">
    <property type="entry name" value="COX3"/>
    <property type="match status" value="1"/>
</dbReference>
<dbReference type="SUPFAM" id="SSF81452">
    <property type="entry name" value="Cytochrome c oxidase subunit III-like"/>
    <property type="match status" value="1"/>
</dbReference>
<dbReference type="PROSITE" id="PS50253">
    <property type="entry name" value="COX3"/>
    <property type="match status" value="1"/>
</dbReference>
<protein>
    <recommendedName>
        <fullName>Cytochrome c oxidase subunit 3</fullName>
        <ecNumber>7.1.1.9</ecNumber>
    </recommendedName>
    <alternativeName>
        <fullName>Cytochrome aa3 subunit 3</fullName>
    </alternativeName>
    <alternativeName>
        <fullName>Cytochrome c oxidase polypeptide III</fullName>
    </alternativeName>
</protein>
<gene>
    <name type="primary">ctaE</name>
    <name type="ordered locus">BpOF4_00905</name>
</gene>
<keyword id="KW-1003">Cell membrane</keyword>
<keyword id="KW-0472">Membrane</keyword>
<keyword id="KW-1185">Reference proteome</keyword>
<keyword id="KW-1278">Translocase</keyword>
<keyword id="KW-0812">Transmembrane</keyword>
<keyword id="KW-1133">Transmembrane helix</keyword>
<organism>
    <name type="scientific">Alkalihalophilus pseudofirmus (strain ATCC BAA-2126 / JCM 17055 / OF4)</name>
    <name type="common">Bacillus pseudofirmus</name>
    <dbReference type="NCBI Taxonomy" id="398511"/>
    <lineage>
        <taxon>Bacteria</taxon>
        <taxon>Bacillati</taxon>
        <taxon>Bacillota</taxon>
        <taxon>Bacilli</taxon>
        <taxon>Bacillales</taxon>
        <taxon>Bacillaceae</taxon>
        <taxon>Alkalihalophilus</taxon>
    </lineage>
</organism>
<proteinExistence type="inferred from homology"/>
<sequence length="206" mass="22856">MAGAVDTSKGLPSHPERATLEGKNKFLGFWFFLGGETILFATFFGTFLGLRGGTADGPTSADLVALDLVFIMTMLLLTSSLTSVLAMFAMKKNNFKAMMIWMWITVVLGLAFLGFEIYEFHHYVVDYQFGFSTSAFASAFYSLVGLHGAHVAFGLSWIIVLLIRYRKSGITLTNAPKFYVAGLYWHFIDVVWVFIFTVVYLMGVGG</sequence>
<evidence type="ECO:0000255" key="1"/>
<evidence type="ECO:0000305" key="2"/>